<accession>Q5B5W1</accession>
<accession>C8V5G9</accession>
<dbReference type="EC" id="5.2.1.8"/>
<dbReference type="EMBL" id="AACD01000066">
    <property type="protein sequence ID" value="EAA58957.1"/>
    <property type="molecule type" value="Genomic_DNA"/>
</dbReference>
<dbReference type="EMBL" id="BN001302">
    <property type="protein sequence ID" value="CBF74769.1"/>
    <property type="molecule type" value="Genomic_DNA"/>
</dbReference>
<dbReference type="RefSeq" id="XP_661673.1">
    <property type="nucleotide sequence ID" value="XM_656581.1"/>
</dbReference>
<dbReference type="SMR" id="Q5B5W1"/>
<dbReference type="STRING" id="227321.Q5B5W1"/>
<dbReference type="EnsemblFungi" id="CBF74769">
    <property type="protein sequence ID" value="CBF74769"/>
    <property type="gene ID" value="ANIA_04069"/>
</dbReference>
<dbReference type="KEGG" id="ani:ANIA_04069"/>
<dbReference type="VEuPathDB" id="FungiDB:AN4069"/>
<dbReference type="eggNOG" id="KOG3258">
    <property type="taxonomic scope" value="Eukaryota"/>
</dbReference>
<dbReference type="HOGENOM" id="CLU_090028_2_0_1"/>
<dbReference type="InParanoid" id="Q5B5W1"/>
<dbReference type="OMA" id="NAINVRH"/>
<dbReference type="OrthoDB" id="1911748at2759"/>
<dbReference type="Proteomes" id="UP000000560">
    <property type="component" value="Chromosome II"/>
</dbReference>
<dbReference type="GO" id="GO:0005634">
    <property type="term" value="C:nucleus"/>
    <property type="evidence" value="ECO:0000318"/>
    <property type="project" value="GO_Central"/>
</dbReference>
<dbReference type="GO" id="GO:0003677">
    <property type="term" value="F:DNA binding"/>
    <property type="evidence" value="ECO:0007669"/>
    <property type="project" value="InterPro"/>
</dbReference>
<dbReference type="GO" id="GO:0003755">
    <property type="term" value="F:peptidyl-prolyl cis-trans isomerase activity"/>
    <property type="evidence" value="ECO:0007669"/>
    <property type="project" value="UniProtKB-KW"/>
</dbReference>
<dbReference type="GO" id="GO:0006364">
    <property type="term" value="P:rRNA processing"/>
    <property type="evidence" value="ECO:0007669"/>
    <property type="project" value="InterPro"/>
</dbReference>
<dbReference type="Gene3D" id="3.10.50.40">
    <property type="match status" value="1"/>
</dbReference>
<dbReference type="InterPro" id="IPR043323">
    <property type="entry name" value="PIN4"/>
</dbReference>
<dbReference type="InterPro" id="IPR046357">
    <property type="entry name" value="PPIase_dom_sf"/>
</dbReference>
<dbReference type="InterPro" id="IPR000297">
    <property type="entry name" value="PPIase_PpiC"/>
</dbReference>
<dbReference type="PANTHER" id="PTHR45995">
    <property type="match status" value="1"/>
</dbReference>
<dbReference type="Pfam" id="PF13616">
    <property type="entry name" value="Rotamase_3"/>
    <property type="match status" value="1"/>
</dbReference>
<dbReference type="SUPFAM" id="SSF54534">
    <property type="entry name" value="FKBP-like"/>
    <property type="match status" value="1"/>
</dbReference>
<dbReference type="PROSITE" id="PS50198">
    <property type="entry name" value="PPIC_PPIASE_2"/>
    <property type="match status" value="1"/>
</dbReference>
<reference key="1">
    <citation type="journal article" date="2005" name="Nature">
        <title>Sequencing of Aspergillus nidulans and comparative analysis with A. fumigatus and A. oryzae.</title>
        <authorList>
            <person name="Galagan J.E."/>
            <person name="Calvo S.E."/>
            <person name="Cuomo C."/>
            <person name="Ma L.-J."/>
            <person name="Wortman J.R."/>
            <person name="Batzoglou S."/>
            <person name="Lee S.-I."/>
            <person name="Bastuerkmen M."/>
            <person name="Spevak C.C."/>
            <person name="Clutterbuck J."/>
            <person name="Kapitonov V."/>
            <person name="Jurka J."/>
            <person name="Scazzocchio C."/>
            <person name="Farman M.L."/>
            <person name="Butler J."/>
            <person name="Purcell S."/>
            <person name="Harris S."/>
            <person name="Braus G.H."/>
            <person name="Draht O."/>
            <person name="Busch S."/>
            <person name="D'Enfert C."/>
            <person name="Bouchier C."/>
            <person name="Goldman G.H."/>
            <person name="Bell-Pedersen D."/>
            <person name="Griffiths-Jones S."/>
            <person name="Doonan J.H."/>
            <person name="Yu J."/>
            <person name="Vienken K."/>
            <person name="Pain A."/>
            <person name="Freitag M."/>
            <person name="Selker E.U."/>
            <person name="Archer D.B."/>
            <person name="Penalva M.A."/>
            <person name="Oakley B.R."/>
            <person name="Momany M."/>
            <person name="Tanaka T."/>
            <person name="Kumagai T."/>
            <person name="Asai K."/>
            <person name="Machida M."/>
            <person name="Nierman W.C."/>
            <person name="Denning D.W."/>
            <person name="Caddick M.X."/>
            <person name="Hynes M."/>
            <person name="Paoletti M."/>
            <person name="Fischer R."/>
            <person name="Miller B.L."/>
            <person name="Dyer P.S."/>
            <person name="Sachs M.S."/>
            <person name="Osmani S.A."/>
            <person name="Birren B.W."/>
        </authorList>
    </citation>
    <scope>NUCLEOTIDE SEQUENCE [LARGE SCALE GENOMIC DNA]</scope>
    <source>
        <strain>FGSC A4 / ATCC 38163 / CBS 112.46 / NRRL 194 / M139</strain>
    </source>
</reference>
<reference key="2">
    <citation type="journal article" date="2009" name="Fungal Genet. Biol.">
        <title>The 2008 update of the Aspergillus nidulans genome annotation: a community effort.</title>
        <authorList>
            <person name="Wortman J.R."/>
            <person name="Gilsenan J.M."/>
            <person name="Joardar V."/>
            <person name="Deegan J."/>
            <person name="Clutterbuck J."/>
            <person name="Andersen M.R."/>
            <person name="Archer D."/>
            <person name="Bencina M."/>
            <person name="Braus G."/>
            <person name="Coutinho P."/>
            <person name="von Dohren H."/>
            <person name="Doonan J."/>
            <person name="Driessen A.J."/>
            <person name="Durek P."/>
            <person name="Espeso E."/>
            <person name="Fekete E."/>
            <person name="Flipphi M."/>
            <person name="Estrada C.G."/>
            <person name="Geysens S."/>
            <person name="Goldman G."/>
            <person name="de Groot P.W."/>
            <person name="Hansen K."/>
            <person name="Harris S.D."/>
            <person name="Heinekamp T."/>
            <person name="Helmstaedt K."/>
            <person name="Henrissat B."/>
            <person name="Hofmann G."/>
            <person name="Homan T."/>
            <person name="Horio T."/>
            <person name="Horiuchi H."/>
            <person name="James S."/>
            <person name="Jones M."/>
            <person name="Karaffa L."/>
            <person name="Karanyi Z."/>
            <person name="Kato M."/>
            <person name="Keller N."/>
            <person name="Kelly D.E."/>
            <person name="Kiel J.A."/>
            <person name="Kim J.M."/>
            <person name="van der Klei I.J."/>
            <person name="Klis F.M."/>
            <person name="Kovalchuk A."/>
            <person name="Krasevec N."/>
            <person name="Kubicek C.P."/>
            <person name="Liu B."/>
            <person name="Maccabe A."/>
            <person name="Meyer V."/>
            <person name="Mirabito P."/>
            <person name="Miskei M."/>
            <person name="Mos M."/>
            <person name="Mullins J."/>
            <person name="Nelson D.R."/>
            <person name="Nielsen J."/>
            <person name="Oakley B.R."/>
            <person name="Osmani S.A."/>
            <person name="Pakula T."/>
            <person name="Paszewski A."/>
            <person name="Paulsen I."/>
            <person name="Pilsyk S."/>
            <person name="Pocsi I."/>
            <person name="Punt P.J."/>
            <person name="Ram A.F."/>
            <person name="Ren Q."/>
            <person name="Robellet X."/>
            <person name="Robson G."/>
            <person name="Seiboth B."/>
            <person name="van Solingen P."/>
            <person name="Specht T."/>
            <person name="Sun J."/>
            <person name="Taheri-Talesh N."/>
            <person name="Takeshita N."/>
            <person name="Ussery D."/>
            <person name="vanKuyk P.A."/>
            <person name="Visser H."/>
            <person name="van de Vondervoort P.J."/>
            <person name="de Vries R.P."/>
            <person name="Walton J."/>
            <person name="Xiang X."/>
            <person name="Xiong Y."/>
            <person name="Zeng A.P."/>
            <person name="Brandt B.W."/>
            <person name="Cornell M.J."/>
            <person name="van den Hondel C.A."/>
            <person name="Visser J."/>
            <person name="Oliver S.G."/>
            <person name="Turner G."/>
        </authorList>
    </citation>
    <scope>GENOME REANNOTATION</scope>
    <source>
        <strain>FGSC A4 / ATCC 38163 / CBS 112.46 / NRRL 194 / M139</strain>
    </source>
</reference>
<keyword id="KW-0413">Isomerase</keyword>
<keyword id="KW-1185">Reference proteome</keyword>
<keyword id="KW-0697">Rotamase</keyword>
<evidence type="ECO:0000250" key="1"/>
<evidence type="ECO:0000255" key="2">
    <source>
        <dbReference type="PROSITE-ProRule" id="PRU00278"/>
    </source>
</evidence>
<evidence type="ECO:0000256" key="3">
    <source>
        <dbReference type="SAM" id="MobiDB-lite"/>
    </source>
</evidence>
<evidence type="ECO:0000305" key="4"/>
<name>PIN4_EMENI</name>
<sequence>MGKGNAKNSGGGDKKSKAKAGDAKDDSKGKMKGAQSVNVRHILCEKFSKKEEALEKIRNGAKFDEVAREYSEDKARQGGSLGWKSKGELELPFEEVAFSLEQSTTGNPKIGEAKTGYGYHIIMVEGRK</sequence>
<gene>
    <name type="primary">pin4</name>
    <name type="ORF">AN4069</name>
</gene>
<feature type="chain" id="PRO_0000232933" description="Peptidyl-prolyl cis-trans isomerase pin4">
    <location>
        <begin position="1"/>
        <end position="128"/>
    </location>
</feature>
<feature type="domain" description="PpiC" evidence="2">
    <location>
        <begin position="34"/>
        <end position="126"/>
    </location>
</feature>
<feature type="region of interest" description="Disordered" evidence="3">
    <location>
        <begin position="1"/>
        <end position="35"/>
    </location>
</feature>
<feature type="compositionally biased region" description="Basic and acidic residues" evidence="3">
    <location>
        <begin position="12"/>
        <end position="29"/>
    </location>
</feature>
<protein>
    <recommendedName>
        <fullName>Peptidyl-prolyl cis-trans isomerase pin4</fullName>
        <shortName>PPIase pin4</shortName>
        <ecNumber>5.2.1.8</ecNumber>
    </recommendedName>
    <alternativeName>
        <fullName>Parvulin-14</fullName>
        <shortName>Par14</shortName>
    </alternativeName>
</protein>
<comment type="function">
    <text evidence="1">PPIases accelerate the folding of proteins. It catalyzes the cis-trans isomerization of proline imidic peptide bonds in oligopeptides (By similarity).</text>
</comment>
<comment type="catalytic activity">
    <reaction>
        <text>[protein]-peptidylproline (omega=180) = [protein]-peptidylproline (omega=0)</text>
        <dbReference type="Rhea" id="RHEA:16237"/>
        <dbReference type="Rhea" id="RHEA-COMP:10747"/>
        <dbReference type="Rhea" id="RHEA-COMP:10748"/>
        <dbReference type="ChEBI" id="CHEBI:83833"/>
        <dbReference type="ChEBI" id="CHEBI:83834"/>
        <dbReference type="EC" id="5.2.1.8"/>
    </reaction>
</comment>
<comment type="similarity">
    <text evidence="4">Belongs to the PpiC/parvulin rotamase family. PIN4 subfamily.</text>
</comment>
<organism>
    <name type="scientific">Emericella nidulans (strain FGSC A4 / ATCC 38163 / CBS 112.46 / NRRL 194 / M139)</name>
    <name type="common">Aspergillus nidulans</name>
    <dbReference type="NCBI Taxonomy" id="227321"/>
    <lineage>
        <taxon>Eukaryota</taxon>
        <taxon>Fungi</taxon>
        <taxon>Dikarya</taxon>
        <taxon>Ascomycota</taxon>
        <taxon>Pezizomycotina</taxon>
        <taxon>Eurotiomycetes</taxon>
        <taxon>Eurotiomycetidae</taxon>
        <taxon>Eurotiales</taxon>
        <taxon>Aspergillaceae</taxon>
        <taxon>Aspergillus</taxon>
        <taxon>Aspergillus subgen. Nidulantes</taxon>
    </lineage>
</organism>
<proteinExistence type="inferred from homology"/>